<protein>
    <recommendedName>
        <fullName>Succinate dehydrogenase [ubiquinone] iron-sulfur subunit, mitochondrial</fullName>
        <ecNumber evidence="1">1.3.5.1</ecNumber>
    </recommendedName>
    <alternativeName>
        <fullName>Iron-sulfur subunit of complex II</fullName>
        <shortName>Ip</shortName>
    </alternativeName>
    <alternativeName>
        <fullName>Malate dehydrogenase [quinone] iron-sulfur subunit</fullName>
        <ecNumber evidence="3">1.1.5.-</ecNumber>
    </alternativeName>
</protein>
<name>SDHB_DANRE</name>
<gene>
    <name type="primary">sdhb</name>
</gene>
<keyword id="KW-0001">2Fe-2S</keyword>
<keyword id="KW-0003">3Fe-4S</keyword>
<keyword id="KW-0004">4Fe-4S</keyword>
<keyword id="KW-0249">Electron transport</keyword>
<keyword id="KW-0408">Iron</keyword>
<keyword id="KW-0411">Iron-sulfur</keyword>
<keyword id="KW-0472">Membrane</keyword>
<keyword id="KW-0479">Metal-binding</keyword>
<keyword id="KW-0496">Mitochondrion</keyword>
<keyword id="KW-0999">Mitochondrion inner membrane</keyword>
<keyword id="KW-0560">Oxidoreductase</keyword>
<keyword id="KW-1185">Reference proteome</keyword>
<keyword id="KW-0809">Transit peptide</keyword>
<keyword id="KW-0813">Transport</keyword>
<keyword id="KW-0816">Tricarboxylic acid cycle</keyword>
<evidence type="ECO:0000250" key="1">
    <source>
        <dbReference type="UniProtKB" id="P21912"/>
    </source>
</evidence>
<evidence type="ECO:0000250" key="2">
    <source>
        <dbReference type="UniProtKB" id="Q007T0"/>
    </source>
</evidence>
<evidence type="ECO:0000250" key="3">
    <source>
        <dbReference type="UniProtKB" id="Q3T189"/>
    </source>
</evidence>
<evidence type="ECO:0000250" key="4">
    <source>
        <dbReference type="UniProtKB" id="Q9YHT2"/>
    </source>
</evidence>
<evidence type="ECO:0000255" key="5">
    <source>
        <dbReference type="PROSITE-ProRule" id="PRU00465"/>
    </source>
</evidence>
<evidence type="ECO:0000255" key="6">
    <source>
        <dbReference type="PROSITE-ProRule" id="PRU00711"/>
    </source>
</evidence>
<evidence type="ECO:0000305" key="7"/>
<accession>A5PL98</accession>
<feature type="transit peptide" description="Mitochondrion" evidence="1">
    <location>
        <begin position="1"/>
        <end position="25"/>
    </location>
</feature>
<feature type="chain" id="PRO_0000343801" description="Succinate dehydrogenase [ubiquinone] iron-sulfur subunit, mitochondrial">
    <location>
        <begin position="26"/>
        <end position="280"/>
    </location>
</feature>
<feature type="domain" description="2Fe-2S ferredoxin-type" evidence="5">
    <location>
        <begin position="39"/>
        <end position="129"/>
    </location>
</feature>
<feature type="domain" description="4Fe-4S ferredoxin-type" evidence="6">
    <location>
        <begin position="175"/>
        <end position="205"/>
    </location>
</feature>
<feature type="binding site" evidence="2">
    <location>
        <position position="92"/>
    </location>
    <ligand>
        <name>[2Fe-2S] cluster</name>
        <dbReference type="ChEBI" id="CHEBI:190135"/>
    </ligand>
</feature>
<feature type="binding site" evidence="2">
    <location>
        <position position="97"/>
    </location>
    <ligand>
        <name>[2Fe-2S] cluster</name>
        <dbReference type="ChEBI" id="CHEBI:190135"/>
    </ligand>
</feature>
<feature type="binding site" evidence="2">
    <location>
        <position position="100"/>
    </location>
    <ligand>
        <name>[2Fe-2S] cluster</name>
        <dbReference type="ChEBI" id="CHEBI:190135"/>
    </ligand>
</feature>
<feature type="binding site" evidence="2">
    <location>
        <position position="112"/>
    </location>
    <ligand>
        <name>[2Fe-2S] cluster</name>
        <dbReference type="ChEBI" id="CHEBI:190135"/>
    </ligand>
</feature>
<feature type="binding site" evidence="2">
    <location>
        <position position="185"/>
    </location>
    <ligand>
        <name>[4Fe-4S] cluster</name>
        <dbReference type="ChEBI" id="CHEBI:49883"/>
    </ligand>
</feature>
<feature type="binding site" evidence="2">
    <location>
        <position position="188"/>
    </location>
    <ligand>
        <name>[4Fe-4S] cluster</name>
        <dbReference type="ChEBI" id="CHEBI:49883"/>
    </ligand>
</feature>
<feature type="binding site" evidence="2">
    <location>
        <position position="191"/>
    </location>
    <ligand>
        <name>[4Fe-4S] cluster</name>
        <dbReference type="ChEBI" id="CHEBI:49883"/>
    </ligand>
</feature>
<feature type="binding site" evidence="2">
    <location>
        <position position="195"/>
    </location>
    <ligand>
        <name>[3Fe-4S] cluster</name>
        <dbReference type="ChEBI" id="CHEBI:21137"/>
    </ligand>
</feature>
<feature type="binding site" evidence="2">
    <location>
        <position position="200"/>
    </location>
    <ligand>
        <name>a ubiquinone</name>
        <dbReference type="ChEBI" id="CHEBI:16389"/>
        <note>ligand shared with dhsd</note>
    </ligand>
</feature>
<feature type="binding site" evidence="2">
    <location>
        <position position="242"/>
    </location>
    <ligand>
        <name>[3Fe-4S] cluster</name>
        <dbReference type="ChEBI" id="CHEBI:21137"/>
    </ligand>
</feature>
<feature type="binding site" evidence="2">
    <location>
        <position position="248"/>
    </location>
    <ligand>
        <name>[3Fe-4S] cluster</name>
        <dbReference type="ChEBI" id="CHEBI:21137"/>
    </ligand>
</feature>
<feature type="binding site" evidence="2">
    <location>
        <position position="252"/>
    </location>
    <ligand>
        <name>[4Fe-4S] cluster</name>
        <dbReference type="ChEBI" id="CHEBI:49883"/>
    </ligand>
</feature>
<organism>
    <name type="scientific">Danio rerio</name>
    <name type="common">Zebrafish</name>
    <name type="synonym">Brachydanio rerio</name>
    <dbReference type="NCBI Taxonomy" id="7955"/>
    <lineage>
        <taxon>Eukaryota</taxon>
        <taxon>Metazoa</taxon>
        <taxon>Chordata</taxon>
        <taxon>Craniata</taxon>
        <taxon>Vertebrata</taxon>
        <taxon>Euteleostomi</taxon>
        <taxon>Actinopterygii</taxon>
        <taxon>Neopterygii</taxon>
        <taxon>Teleostei</taxon>
        <taxon>Ostariophysi</taxon>
        <taxon>Cypriniformes</taxon>
        <taxon>Danionidae</taxon>
        <taxon>Danioninae</taxon>
        <taxon>Danio</taxon>
    </lineage>
</organism>
<reference key="1">
    <citation type="submission" date="2007-06" db="EMBL/GenBank/DDBJ databases">
        <authorList>
            <consortium name="NIH - Zebrafish Gene Collection (ZGC) project"/>
        </authorList>
    </citation>
    <scope>NUCLEOTIDE SEQUENCE [LARGE SCALE MRNA]</scope>
    <source>
        <tissue>Eye</tissue>
    </source>
</reference>
<comment type="function">
    <text evidence="1 3">Iron-sulfur protein (IP) subunit of the succinate dehydrogenase complex (mitochondrial respiratory chain complex II), responsible for transferring electrons from succinate to ubiquinone (coenzyme Q) (By similarity). SDH also oxidizes malate to the non-canonical enol form of oxaloacetate, enol-oxaloacetate. Enol-oxaloacetate, which is a potent inhibitor of the succinate dehydrogenase activity, is further isomerized into keto-oxaloacetate (By similarity).</text>
</comment>
<comment type="catalytic activity">
    <reaction evidence="1">
        <text>a quinone + succinate = fumarate + a quinol</text>
        <dbReference type="Rhea" id="RHEA:40523"/>
        <dbReference type="ChEBI" id="CHEBI:24646"/>
        <dbReference type="ChEBI" id="CHEBI:29806"/>
        <dbReference type="ChEBI" id="CHEBI:30031"/>
        <dbReference type="ChEBI" id="CHEBI:132124"/>
        <dbReference type="EC" id="1.3.5.1"/>
    </reaction>
</comment>
<comment type="catalytic activity">
    <reaction evidence="3">
        <text>(R)-malate + a quinone = enol-oxaloacetate + a quinol</text>
        <dbReference type="Rhea" id="RHEA:79827"/>
        <dbReference type="ChEBI" id="CHEBI:15588"/>
        <dbReference type="ChEBI" id="CHEBI:17479"/>
        <dbReference type="ChEBI" id="CHEBI:24646"/>
        <dbReference type="ChEBI" id="CHEBI:132124"/>
    </reaction>
    <physiologicalReaction direction="left-to-right" evidence="3">
        <dbReference type="Rhea" id="RHEA:79828"/>
    </physiologicalReaction>
</comment>
<comment type="catalytic activity">
    <reaction evidence="3">
        <text>(S)-malate + a quinone = enol-oxaloacetate + a quinol</text>
        <dbReference type="Rhea" id="RHEA:79831"/>
        <dbReference type="ChEBI" id="CHEBI:15589"/>
        <dbReference type="ChEBI" id="CHEBI:17479"/>
        <dbReference type="ChEBI" id="CHEBI:24646"/>
        <dbReference type="ChEBI" id="CHEBI:132124"/>
    </reaction>
    <physiologicalReaction direction="left-to-right" evidence="3">
        <dbReference type="Rhea" id="RHEA:79832"/>
    </physiologicalReaction>
</comment>
<comment type="cofactor">
    <cofactor evidence="2">
        <name>[2Fe-2S] cluster</name>
        <dbReference type="ChEBI" id="CHEBI:190135"/>
    </cofactor>
    <text evidence="2">Binds 1 [2Fe-2S] cluster.</text>
</comment>
<comment type="cofactor">
    <cofactor evidence="2">
        <name>[3Fe-4S] cluster</name>
        <dbReference type="ChEBI" id="CHEBI:21137"/>
    </cofactor>
    <text evidence="2">Binds 1 [3Fe-4S] cluster.</text>
</comment>
<comment type="cofactor">
    <cofactor evidence="2">
        <name>[4Fe-4S] cluster</name>
        <dbReference type="ChEBI" id="CHEBI:49883"/>
    </cofactor>
    <text evidence="2">Binds 1 [4Fe-4S] cluster.</text>
</comment>
<comment type="activity regulation">
    <text evidence="3">Enol-oxaloacetate inhibits the succinate dehydrogenase activity.</text>
</comment>
<comment type="pathway">
    <text>Carbohydrate metabolism; tricarboxylic acid cycle; fumarate from succinate (eukaryal route): step 1/1.</text>
</comment>
<comment type="subunit">
    <text evidence="1">Component of complex II composed of four subunits: the flavoprotein (FP) sdha, iron-sulfur protein (IP) sdhb, and a cytochrome b composed of sdhc and sdhd.</text>
</comment>
<comment type="subcellular location">
    <subcellularLocation>
        <location evidence="4">Mitochondrion inner membrane</location>
        <topology evidence="4">Peripheral membrane protein</topology>
        <orientation evidence="4">Matrix side</orientation>
    </subcellularLocation>
</comment>
<comment type="similarity">
    <text evidence="7">Belongs to the succinate dehydrogenase/fumarate reductase iron-sulfur protein family.</text>
</comment>
<dbReference type="EC" id="1.3.5.1" evidence="1"/>
<dbReference type="EC" id="1.1.5.-" evidence="3"/>
<dbReference type="EMBL" id="BC142799">
    <property type="protein sequence ID" value="AAI42800.1"/>
    <property type="molecule type" value="mRNA"/>
</dbReference>
<dbReference type="RefSeq" id="NP_001092210.1">
    <property type="nucleotide sequence ID" value="NM_001098740.1"/>
</dbReference>
<dbReference type="SMR" id="A5PL98"/>
<dbReference type="FunCoup" id="A5PL98">
    <property type="interactions" value="2700"/>
</dbReference>
<dbReference type="STRING" id="7955.ENSDARP00000062263"/>
<dbReference type="PaxDb" id="7955-ENSDARP00000062263"/>
<dbReference type="PeptideAtlas" id="A5PL98"/>
<dbReference type="Ensembl" id="ENSDART00000062264">
    <property type="protein sequence ID" value="ENSDARP00000062263"/>
    <property type="gene ID" value="ENSDARG00000075768"/>
</dbReference>
<dbReference type="GeneID" id="562149"/>
<dbReference type="KEGG" id="dre:562149"/>
<dbReference type="AGR" id="ZFIN:ZDB-GENE-030131-8005"/>
<dbReference type="CTD" id="6390"/>
<dbReference type="ZFIN" id="ZDB-GENE-030131-8005">
    <property type="gene designation" value="sdhb"/>
</dbReference>
<dbReference type="eggNOG" id="KOG3049">
    <property type="taxonomic scope" value="Eukaryota"/>
</dbReference>
<dbReference type="HOGENOM" id="CLU_044838_0_2_1"/>
<dbReference type="InParanoid" id="A5PL98"/>
<dbReference type="OMA" id="DGQYFGP"/>
<dbReference type="OrthoDB" id="1696654at2759"/>
<dbReference type="PhylomeDB" id="A5PL98"/>
<dbReference type="TreeFam" id="TF300754"/>
<dbReference type="Reactome" id="R-DRE-71403">
    <property type="pathway name" value="Citric acid cycle (TCA cycle)"/>
</dbReference>
<dbReference type="UniPathway" id="UPA00223">
    <property type="reaction ID" value="UER01006"/>
</dbReference>
<dbReference type="PRO" id="PR:A5PL98"/>
<dbReference type="Proteomes" id="UP000000437">
    <property type="component" value="Chromosome 22"/>
</dbReference>
<dbReference type="Bgee" id="ENSDARG00000075768">
    <property type="expression patterns" value="Expressed in cardiac ventricle and 38 other cell types or tissues"/>
</dbReference>
<dbReference type="GO" id="GO:0005743">
    <property type="term" value="C:mitochondrial inner membrane"/>
    <property type="evidence" value="ECO:0000250"/>
    <property type="project" value="UniProtKB"/>
</dbReference>
<dbReference type="GO" id="GO:0031966">
    <property type="term" value="C:mitochondrial membrane"/>
    <property type="evidence" value="ECO:0000318"/>
    <property type="project" value="GO_Central"/>
</dbReference>
<dbReference type="GO" id="GO:0045273">
    <property type="term" value="C:respiratory chain complex II (succinate dehydrogenase)"/>
    <property type="evidence" value="ECO:0000250"/>
    <property type="project" value="UniProtKB"/>
</dbReference>
<dbReference type="GO" id="GO:0051537">
    <property type="term" value="F:2 iron, 2 sulfur cluster binding"/>
    <property type="evidence" value="ECO:0000250"/>
    <property type="project" value="UniProtKB"/>
</dbReference>
<dbReference type="GO" id="GO:0051538">
    <property type="term" value="F:3 iron, 4 sulfur cluster binding"/>
    <property type="evidence" value="ECO:0000250"/>
    <property type="project" value="UniProtKB"/>
</dbReference>
<dbReference type="GO" id="GO:0051539">
    <property type="term" value="F:4 iron, 4 sulfur cluster binding"/>
    <property type="evidence" value="ECO:0000250"/>
    <property type="project" value="UniProtKB"/>
</dbReference>
<dbReference type="GO" id="GO:0009055">
    <property type="term" value="F:electron transfer activity"/>
    <property type="evidence" value="ECO:0007669"/>
    <property type="project" value="InterPro"/>
</dbReference>
<dbReference type="GO" id="GO:0046872">
    <property type="term" value="F:metal ion binding"/>
    <property type="evidence" value="ECO:0007669"/>
    <property type="project" value="UniProtKB-KW"/>
</dbReference>
<dbReference type="GO" id="GO:0008177">
    <property type="term" value="F:succinate dehydrogenase (quinone) activity"/>
    <property type="evidence" value="ECO:0000250"/>
    <property type="project" value="UniProtKB"/>
</dbReference>
<dbReference type="GO" id="GO:0048039">
    <property type="term" value="F:ubiquinone binding"/>
    <property type="evidence" value="ECO:0000250"/>
    <property type="project" value="UniProtKB"/>
</dbReference>
<dbReference type="GO" id="GO:0009060">
    <property type="term" value="P:aerobic respiration"/>
    <property type="evidence" value="ECO:0000318"/>
    <property type="project" value="GO_Central"/>
</dbReference>
<dbReference type="GO" id="GO:0006121">
    <property type="term" value="P:mitochondrial electron transport, succinate to ubiquinone"/>
    <property type="evidence" value="ECO:0000315"/>
    <property type="project" value="ZFIN"/>
</dbReference>
<dbReference type="GO" id="GO:0022904">
    <property type="term" value="P:respiratory electron transport chain"/>
    <property type="evidence" value="ECO:0000318"/>
    <property type="project" value="GO_Central"/>
</dbReference>
<dbReference type="GO" id="GO:0006099">
    <property type="term" value="P:tricarboxylic acid cycle"/>
    <property type="evidence" value="ECO:0007669"/>
    <property type="project" value="UniProtKB-UniPathway"/>
</dbReference>
<dbReference type="CDD" id="cd00207">
    <property type="entry name" value="fer2"/>
    <property type="match status" value="1"/>
</dbReference>
<dbReference type="FunFam" id="1.10.1060.10:FF:000029">
    <property type="entry name" value="Succinate dehydrogenase [ubiquinone] iron-sulfur subunit, mitochondrial"/>
    <property type="match status" value="1"/>
</dbReference>
<dbReference type="FunFam" id="3.10.20.30:FF:000007">
    <property type="entry name" value="Succinate dehydrogenase [ubiquinone] iron-sulfur subunit, mitochondrial"/>
    <property type="match status" value="1"/>
</dbReference>
<dbReference type="Gene3D" id="3.10.20.30">
    <property type="match status" value="1"/>
</dbReference>
<dbReference type="Gene3D" id="1.10.1060.10">
    <property type="entry name" value="Alpha-helical ferredoxin"/>
    <property type="match status" value="1"/>
</dbReference>
<dbReference type="InterPro" id="IPR036010">
    <property type="entry name" value="2Fe-2S_ferredoxin-like_sf"/>
</dbReference>
<dbReference type="InterPro" id="IPR001041">
    <property type="entry name" value="2Fe-2S_ferredoxin-type"/>
</dbReference>
<dbReference type="InterPro" id="IPR006058">
    <property type="entry name" value="2Fe2S_fd_BS"/>
</dbReference>
<dbReference type="InterPro" id="IPR017896">
    <property type="entry name" value="4Fe4S_Fe-S-bd"/>
</dbReference>
<dbReference type="InterPro" id="IPR017900">
    <property type="entry name" value="4Fe4S_Fe_S_CS"/>
</dbReference>
<dbReference type="InterPro" id="IPR012675">
    <property type="entry name" value="Beta-grasp_dom_sf"/>
</dbReference>
<dbReference type="InterPro" id="IPR009051">
    <property type="entry name" value="Helical_ferredxn"/>
</dbReference>
<dbReference type="InterPro" id="IPR050573">
    <property type="entry name" value="SDH/FRD_Iron-Sulfur"/>
</dbReference>
<dbReference type="InterPro" id="IPR004489">
    <property type="entry name" value="Succ_DH/fum_Rdtase_Fe-S"/>
</dbReference>
<dbReference type="InterPro" id="IPR025192">
    <property type="entry name" value="Succ_DH/fum_Rdtase_N"/>
</dbReference>
<dbReference type="NCBIfam" id="TIGR00384">
    <property type="entry name" value="dhsB"/>
    <property type="match status" value="1"/>
</dbReference>
<dbReference type="NCBIfam" id="NF004616">
    <property type="entry name" value="PRK05950.1"/>
    <property type="match status" value="1"/>
</dbReference>
<dbReference type="PANTHER" id="PTHR11921:SF29">
    <property type="entry name" value="SUCCINATE DEHYDROGENASE [UBIQUINONE] IRON-SULFUR SUBUNIT, MITOCHONDRIAL"/>
    <property type="match status" value="1"/>
</dbReference>
<dbReference type="PANTHER" id="PTHR11921">
    <property type="entry name" value="SUCCINATE DEHYDROGENASE IRON-SULFUR PROTEIN"/>
    <property type="match status" value="1"/>
</dbReference>
<dbReference type="Pfam" id="PF13085">
    <property type="entry name" value="Fer2_3"/>
    <property type="match status" value="1"/>
</dbReference>
<dbReference type="Pfam" id="PF13534">
    <property type="entry name" value="Fer4_17"/>
    <property type="match status" value="1"/>
</dbReference>
<dbReference type="SUPFAM" id="SSF54292">
    <property type="entry name" value="2Fe-2S ferredoxin-like"/>
    <property type="match status" value="1"/>
</dbReference>
<dbReference type="SUPFAM" id="SSF46548">
    <property type="entry name" value="alpha-helical ferredoxin"/>
    <property type="match status" value="1"/>
</dbReference>
<dbReference type="PROSITE" id="PS00197">
    <property type="entry name" value="2FE2S_FER_1"/>
    <property type="match status" value="1"/>
</dbReference>
<dbReference type="PROSITE" id="PS51085">
    <property type="entry name" value="2FE2S_FER_2"/>
    <property type="match status" value="1"/>
</dbReference>
<dbReference type="PROSITE" id="PS00198">
    <property type="entry name" value="4FE4S_FER_1"/>
    <property type="match status" value="1"/>
</dbReference>
<dbReference type="PROSITE" id="PS51379">
    <property type="entry name" value="4FE4S_FER_2"/>
    <property type="match status" value="1"/>
</dbReference>
<proteinExistence type="evidence at transcript level"/>
<sequence>MAAVCFSLSRCCSAVHRPAVTAVRFAQTAAAPAAQPRIKKFQIYRWDPDTVGDKPRMQTYEIDLNTCGPMVLDALIKIKNEMDSTLTFRRSCREGICGSCAMNINGGNTLACLNKIDTNTSKVTKIYPLPHMYVVKDLVPDMSNFYAQYKSIEPYLKKKDESQQGKQQYLQSVEDRQKLDGLYECILCACCSTSCPSYWWNADKYLGPAVLMQAYRWMIDSRDDFTEDRLSKLQDPFSLYRCHTIMNCTRTCPKGLNPGKAIAEIKKMMVTYKQKDAVAA</sequence>